<feature type="chain" id="PRO_0000452830" description="Ninjurin-B">
    <location>
        <begin position="1"/>
        <end position="181"/>
    </location>
</feature>
<feature type="topological domain" description="Extracellular" evidence="8">
    <location>
        <begin position="1"/>
        <end position="115"/>
    </location>
</feature>
<feature type="transmembrane region" description="Helical" evidence="3">
    <location>
        <begin position="116"/>
        <end position="136"/>
    </location>
</feature>
<feature type="topological domain" description="Cytoplasmic" evidence="8">
    <location>
        <begin position="137"/>
        <end position="153"/>
    </location>
</feature>
<feature type="transmembrane region" description="Helical" evidence="3">
    <location>
        <begin position="154"/>
        <end position="174"/>
    </location>
</feature>
<feature type="topological domain" description="Extracellular" evidence="8">
    <location>
        <begin position="175"/>
        <end position="181"/>
    </location>
</feature>
<feature type="region of interest" description="Disordered" evidence="4">
    <location>
        <begin position="1"/>
        <end position="72"/>
    </location>
</feature>
<feature type="region of interest" description="Helix alpha1" evidence="2">
    <location>
        <begin position="80"/>
        <end position="91"/>
    </location>
</feature>
<feature type="region of interest" description="Helix alpha2" evidence="2">
    <location>
        <begin position="94"/>
        <end position="110"/>
    </location>
</feature>
<feature type="compositionally biased region" description="Basic and acidic residues" evidence="4">
    <location>
        <begin position="1"/>
        <end position="10"/>
    </location>
</feature>
<feature type="compositionally biased region" description="Polar residues" evidence="4">
    <location>
        <begin position="12"/>
        <end position="26"/>
    </location>
</feature>
<feature type="compositionally biased region" description="Basic and acidic residues" evidence="4">
    <location>
        <begin position="33"/>
        <end position="49"/>
    </location>
</feature>
<gene>
    <name evidence="6 10" type="primary">NijB</name>
    <name evidence="10" type="ORF">CG11637</name>
</gene>
<organism>
    <name type="scientific">Drosophila melanogaster</name>
    <name type="common">Fruit fly</name>
    <dbReference type="NCBI Taxonomy" id="7227"/>
    <lineage>
        <taxon>Eukaryota</taxon>
        <taxon>Metazoa</taxon>
        <taxon>Ecdysozoa</taxon>
        <taxon>Arthropoda</taxon>
        <taxon>Hexapoda</taxon>
        <taxon>Insecta</taxon>
        <taxon>Pterygota</taxon>
        <taxon>Neoptera</taxon>
        <taxon>Endopterygota</taxon>
        <taxon>Diptera</taxon>
        <taxon>Brachycera</taxon>
        <taxon>Muscomorpha</taxon>
        <taxon>Ephydroidea</taxon>
        <taxon>Drosophilidae</taxon>
        <taxon>Drosophila</taxon>
        <taxon>Sophophora</taxon>
    </lineage>
</organism>
<comment type="function">
    <text evidence="1 5">Effector of non-apoptotic necrotic cell death that mediates plasma membrane rupture (cytolysis): oligomerizes in response to death stimuli and promotes plasma membrane rupture by introducing hydrophilic faces of 2 alpha helices into the hydrophobic membrane, leading to release intracellular molecules that propagate the inflammatory response (PubMed:33472215). Also acts as a homophilic transmembrane adhesion molecule that promotes cell adhesion by mediating homophilic interactions via its extracellular region (By similarity).</text>
</comment>
<comment type="subcellular location">
    <subcellularLocation>
        <location evidence="3">Membrane</location>
        <topology evidence="3">Multi-pass membrane protein</topology>
    </subcellularLocation>
</comment>
<comment type="domain">
    <text evidence="2">Composed of 4 alpha helices: 2 hydrophobic transmembrane regions (alpha3 and alpha4) and 2 alpha helices (alpha1 and alpha2) (By similarity). Alpha1 and alpha2 feature one hydrophobic side and a hydrophilic side (By similarity). In normal conditions, NijB is inactivated and alpha1 and alpha2 helices are not inserted into the membrane (By similarity). Following NijB activation, alpha1 and alpha2 helices insert into the membrane and drive NijB oligomerization via interactions between alpha3 and alpha4 and the hydrophobic face of alpha1 from an adjacent subunit (By similarity). Such structures disrupt membrane integrity and form a lesion through the introduction of the hydrophilic faces of alpha1 and alpha2 into the hydrophobic membrane (By similarity).</text>
</comment>
<comment type="similarity">
    <text evidence="8">Belongs to the ninjurin family.</text>
</comment>
<dbReference type="EMBL" id="AE014296">
    <property type="protein sequence ID" value="AAF49218.1"/>
    <property type="molecule type" value="Genomic_DNA"/>
</dbReference>
<dbReference type="EMBL" id="BT022578">
    <property type="protein sequence ID" value="AAY54994.1"/>
    <property type="molecule type" value="mRNA"/>
</dbReference>
<dbReference type="EMBL" id="BT022514">
    <property type="protein sequence ID" value="AAY54930.1"/>
    <property type="molecule type" value="mRNA"/>
</dbReference>
<dbReference type="EMBL" id="BT022541">
    <property type="protein sequence ID" value="AAY54957.1"/>
    <property type="molecule type" value="mRNA"/>
</dbReference>
<dbReference type="RefSeq" id="NP_649068.1">
    <property type="nucleotide sequence ID" value="NM_140811.2"/>
</dbReference>
<dbReference type="SMR" id="Q9VVT9"/>
<dbReference type="STRING" id="7227.FBpp0074832"/>
<dbReference type="PaxDb" id="7227-FBpp0074832"/>
<dbReference type="EnsemblMetazoa" id="FBtr0075065">
    <property type="protein sequence ID" value="FBpp0074832"/>
    <property type="gene ID" value="FBgn0036822"/>
</dbReference>
<dbReference type="GeneID" id="40057"/>
<dbReference type="KEGG" id="dme:Dmel_CG11637"/>
<dbReference type="UCSC" id="CG11637-RA">
    <property type="organism name" value="d. melanogaster"/>
</dbReference>
<dbReference type="AGR" id="FB:FBgn0036822"/>
<dbReference type="CTD" id="40057"/>
<dbReference type="FlyBase" id="FBgn0036822">
    <property type="gene designation" value="NijB"/>
</dbReference>
<dbReference type="VEuPathDB" id="VectorBase:FBgn0036822"/>
<dbReference type="eggNOG" id="ENOG502T8F5">
    <property type="taxonomic scope" value="Eukaryota"/>
</dbReference>
<dbReference type="HOGENOM" id="CLU_100002_0_0_1"/>
<dbReference type="InParanoid" id="Q9VVT9"/>
<dbReference type="OMA" id="NYMRTNE"/>
<dbReference type="OrthoDB" id="6114058at2759"/>
<dbReference type="PhylomeDB" id="Q9VVT9"/>
<dbReference type="BioGRID-ORCS" id="40057">
    <property type="hits" value="0 hits in 3 CRISPR screens"/>
</dbReference>
<dbReference type="GenomeRNAi" id="40057"/>
<dbReference type="PRO" id="PR:Q9VVT9"/>
<dbReference type="Proteomes" id="UP000000803">
    <property type="component" value="Chromosome 3L"/>
</dbReference>
<dbReference type="Bgee" id="FBgn0036822">
    <property type="expression patterns" value="Expressed in embryonic/larval hemocyte (Drosophila) and 3 other cell types or tissues"/>
</dbReference>
<dbReference type="ExpressionAtlas" id="Q9VVT9">
    <property type="expression patterns" value="baseline and differential"/>
</dbReference>
<dbReference type="GO" id="GO:0016020">
    <property type="term" value="C:membrane"/>
    <property type="evidence" value="ECO:0007669"/>
    <property type="project" value="UniProtKB-SubCell"/>
</dbReference>
<dbReference type="GO" id="GO:0007155">
    <property type="term" value="P:cell adhesion"/>
    <property type="evidence" value="ECO:0000318"/>
    <property type="project" value="GO_Central"/>
</dbReference>
<dbReference type="GO" id="GO:0019835">
    <property type="term" value="P:cytolysis"/>
    <property type="evidence" value="ECO:0000314"/>
    <property type="project" value="UniProtKB"/>
</dbReference>
<dbReference type="GO" id="GO:0031640">
    <property type="term" value="P:killing of cells of another organism"/>
    <property type="evidence" value="ECO:0007669"/>
    <property type="project" value="UniProtKB-KW"/>
</dbReference>
<dbReference type="GO" id="GO:0042246">
    <property type="term" value="P:tissue regeneration"/>
    <property type="evidence" value="ECO:0007669"/>
    <property type="project" value="InterPro"/>
</dbReference>
<dbReference type="InterPro" id="IPR007007">
    <property type="entry name" value="Ninjurin"/>
</dbReference>
<dbReference type="PANTHER" id="PTHR12316:SF1">
    <property type="entry name" value="NINJURIN-B"/>
    <property type="match status" value="1"/>
</dbReference>
<dbReference type="PANTHER" id="PTHR12316">
    <property type="entry name" value="NINJURIN-RELATED"/>
    <property type="match status" value="1"/>
</dbReference>
<dbReference type="Pfam" id="PF04923">
    <property type="entry name" value="Ninjurin"/>
    <property type="match status" value="1"/>
</dbReference>
<evidence type="ECO:0000250" key="1">
    <source>
        <dbReference type="UniProtKB" id="O70131"/>
    </source>
</evidence>
<evidence type="ECO:0000250" key="2">
    <source>
        <dbReference type="UniProtKB" id="Q92982"/>
    </source>
</evidence>
<evidence type="ECO:0000255" key="3"/>
<evidence type="ECO:0000256" key="4">
    <source>
        <dbReference type="SAM" id="MobiDB-lite"/>
    </source>
</evidence>
<evidence type="ECO:0000269" key="5">
    <source>
    </source>
</evidence>
<evidence type="ECO:0000303" key="6">
    <source>
    </source>
</evidence>
<evidence type="ECO:0000303" key="7">
    <source>
    </source>
</evidence>
<evidence type="ECO:0000305" key="8"/>
<evidence type="ECO:0000312" key="9">
    <source>
        <dbReference type="EMBL" id="AAY54957.1"/>
    </source>
</evidence>
<evidence type="ECO:0000312" key="10">
    <source>
        <dbReference type="FlyBase" id="FBgn0036822"/>
    </source>
</evidence>
<sequence length="181" mass="19930">MDSGEVKISLEDSPSSGESFASTTSGPCCGSGRDLDIQVHESHIKDDQFPSRATSELQESKKSNKKCSSDLSTENSYAANKNVAEGLMDIALLSANANQLRFLITYNDKASTYIYSMIMVILSLVLQLLVGIMLIFKRRLKRFRNRSYERTNDLLVMGVFMITVINILLAAFTTTDGGGSH</sequence>
<accession>Q9VVT9</accession>
<accession>Q4V5W5</accession>
<proteinExistence type="evidence at transcript level"/>
<reference key="1">
    <citation type="journal article" date="2000" name="Science">
        <title>The genome sequence of Drosophila melanogaster.</title>
        <authorList>
            <person name="Adams M.D."/>
            <person name="Celniker S.E."/>
            <person name="Holt R.A."/>
            <person name="Evans C.A."/>
            <person name="Gocayne J.D."/>
            <person name="Amanatides P.G."/>
            <person name="Scherer S.E."/>
            <person name="Li P.W."/>
            <person name="Hoskins R.A."/>
            <person name="Galle R.F."/>
            <person name="George R.A."/>
            <person name="Lewis S.E."/>
            <person name="Richards S."/>
            <person name="Ashburner M."/>
            <person name="Henderson S.N."/>
            <person name="Sutton G.G."/>
            <person name="Wortman J.R."/>
            <person name="Yandell M.D."/>
            <person name="Zhang Q."/>
            <person name="Chen L.X."/>
            <person name="Brandon R.C."/>
            <person name="Rogers Y.-H.C."/>
            <person name="Blazej R.G."/>
            <person name="Champe M."/>
            <person name="Pfeiffer B.D."/>
            <person name="Wan K.H."/>
            <person name="Doyle C."/>
            <person name="Baxter E.G."/>
            <person name="Helt G."/>
            <person name="Nelson C.R."/>
            <person name="Miklos G.L.G."/>
            <person name="Abril J.F."/>
            <person name="Agbayani A."/>
            <person name="An H.-J."/>
            <person name="Andrews-Pfannkoch C."/>
            <person name="Baldwin D."/>
            <person name="Ballew R.M."/>
            <person name="Basu A."/>
            <person name="Baxendale J."/>
            <person name="Bayraktaroglu L."/>
            <person name="Beasley E.M."/>
            <person name="Beeson K.Y."/>
            <person name="Benos P.V."/>
            <person name="Berman B.P."/>
            <person name="Bhandari D."/>
            <person name="Bolshakov S."/>
            <person name="Borkova D."/>
            <person name="Botchan M.R."/>
            <person name="Bouck J."/>
            <person name="Brokstein P."/>
            <person name="Brottier P."/>
            <person name="Burtis K.C."/>
            <person name="Busam D.A."/>
            <person name="Butler H."/>
            <person name="Cadieu E."/>
            <person name="Center A."/>
            <person name="Chandra I."/>
            <person name="Cherry J.M."/>
            <person name="Cawley S."/>
            <person name="Dahlke C."/>
            <person name="Davenport L.B."/>
            <person name="Davies P."/>
            <person name="de Pablos B."/>
            <person name="Delcher A."/>
            <person name="Deng Z."/>
            <person name="Mays A.D."/>
            <person name="Dew I."/>
            <person name="Dietz S.M."/>
            <person name="Dodson K."/>
            <person name="Doup L.E."/>
            <person name="Downes M."/>
            <person name="Dugan-Rocha S."/>
            <person name="Dunkov B.C."/>
            <person name="Dunn P."/>
            <person name="Durbin K.J."/>
            <person name="Evangelista C.C."/>
            <person name="Ferraz C."/>
            <person name="Ferriera S."/>
            <person name="Fleischmann W."/>
            <person name="Fosler C."/>
            <person name="Gabrielian A.E."/>
            <person name="Garg N.S."/>
            <person name="Gelbart W.M."/>
            <person name="Glasser K."/>
            <person name="Glodek A."/>
            <person name="Gong F."/>
            <person name="Gorrell J.H."/>
            <person name="Gu Z."/>
            <person name="Guan P."/>
            <person name="Harris M."/>
            <person name="Harris N.L."/>
            <person name="Harvey D.A."/>
            <person name="Heiman T.J."/>
            <person name="Hernandez J.R."/>
            <person name="Houck J."/>
            <person name="Hostin D."/>
            <person name="Houston K.A."/>
            <person name="Howland T.J."/>
            <person name="Wei M.-H."/>
            <person name="Ibegwam C."/>
            <person name="Jalali M."/>
            <person name="Kalush F."/>
            <person name="Karpen G.H."/>
            <person name="Ke Z."/>
            <person name="Kennison J.A."/>
            <person name="Ketchum K.A."/>
            <person name="Kimmel B.E."/>
            <person name="Kodira C.D."/>
            <person name="Kraft C.L."/>
            <person name="Kravitz S."/>
            <person name="Kulp D."/>
            <person name="Lai Z."/>
            <person name="Lasko P."/>
            <person name="Lei Y."/>
            <person name="Levitsky A.A."/>
            <person name="Li J.H."/>
            <person name="Li Z."/>
            <person name="Liang Y."/>
            <person name="Lin X."/>
            <person name="Liu X."/>
            <person name="Mattei B."/>
            <person name="McIntosh T.C."/>
            <person name="McLeod M.P."/>
            <person name="McPherson D."/>
            <person name="Merkulov G."/>
            <person name="Milshina N.V."/>
            <person name="Mobarry C."/>
            <person name="Morris J."/>
            <person name="Moshrefi A."/>
            <person name="Mount S.M."/>
            <person name="Moy M."/>
            <person name="Murphy B."/>
            <person name="Murphy L."/>
            <person name="Muzny D.M."/>
            <person name="Nelson D.L."/>
            <person name="Nelson D.R."/>
            <person name="Nelson K.A."/>
            <person name="Nixon K."/>
            <person name="Nusskern D.R."/>
            <person name="Pacleb J.M."/>
            <person name="Palazzolo M."/>
            <person name="Pittman G.S."/>
            <person name="Pan S."/>
            <person name="Pollard J."/>
            <person name="Puri V."/>
            <person name="Reese M.G."/>
            <person name="Reinert K."/>
            <person name="Remington K."/>
            <person name="Saunders R.D.C."/>
            <person name="Scheeler F."/>
            <person name="Shen H."/>
            <person name="Shue B.C."/>
            <person name="Siden-Kiamos I."/>
            <person name="Simpson M."/>
            <person name="Skupski M.P."/>
            <person name="Smith T.J."/>
            <person name="Spier E."/>
            <person name="Spradling A.C."/>
            <person name="Stapleton M."/>
            <person name="Strong R."/>
            <person name="Sun E."/>
            <person name="Svirskas R."/>
            <person name="Tector C."/>
            <person name="Turner R."/>
            <person name="Venter E."/>
            <person name="Wang A.H."/>
            <person name="Wang X."/>
            <person name="Wang Z.-Y."/>
            <person name="Wassarman D.A."/>
            <person name="Weinstock G.M."/>
            <person name="Weissenbach J."/>
            <person name="Williams S.M."/>
            <person name="Woodage T."/>
            <person name="Worley K.C."/>
            <person name="Wu D."/>
            <person name="Yang S."/>
            <person name="Yao Q.A."/>
            <person name="Ye J."/>
            <person name="Yeh R.-F."/>
            <person name="Zaveri J.S."/>
            <person name="Zhan M."/>
            <person name="Zhang G."/>
            <person name="Zhao Q."/>
            <person name="Zheng L."/>
            <person name="Zheng X.H."/>
            <person name="Zhong F.N."/>
            <person name="Zhong W."/>
            <person name="Zhou X."/>
            <person name="Zhu S.C."/>
            <person name="Zhu X."/>
            <person name="Smith H.O."/>
            <person name="Gibbs R.A."/>
            <person name="Myers E.W."/>
            <person name="Rubin G.M."/>
            <person name="Venter J.C."/>
        </authorList>
    </citation>
    <scope>NUCLEOTIDE SEQUENCE [LARGE SCALE GENOMIC DNA]</scope>
    <source>
        <strain>Berkeley</strain>
    </source>
</reference>
<reference key="2">
    <citation type="journal article" date="2002" name="Genome Biol.">
        <title>Annotation of the Drosophila melanogaster euchromatic genome: a systematic review.</title>
        <authorList>
            <person name="Misra S."/>
            <person name="Crosby M.A."/>
            <person name="Mungall C.J."/>
            <person name="Matthews B.B."/>
            <person name="Campbell K.S."/>
            <person name="Hradecky P."/>
            <person name="Huang Y."/>
            <person name="Kaminker J.S."/>
            <person name="Millburn G.H."/>
            <person name="Prochnik S.E."/>
            <person name="Smith C.D."/>
            <person name="Tupy J.L."/>
            <person name="Whitfield E.J."/>
            <person name="Bayraktaroglu L."/>
            <person name="Berman B.P."/>
            <person name="Bettencourt B.R."/>
            <person name="Celniker S.E."/>
            <person name="de Grey A.D.N.J."/>
            <person name="Drysdale R.A."/>
            <person name="Harris N.L."/>
            <person name="Richter J."/>
            <person name="Russo S."/>
            <person name="Schroeder A.J."/>
            <person name="Shu S.Q."/>
            <person name="Stapleton M."/>
            <person name="Yamada C."/>
            <person name="Ashburner M."/>
            <person name="Gelbart W.M."/>
            <person name="Rubin G.M."/>
            <person name="Lewis S.E."/>
        </authorList>
    </citation>
    <scope>GENOME REANNOTATION</scope>
    <source>
        <strain>Berkeley</strain>
    </source>
</reference>
<reference evidence="9" key="3">
    <citation type="submission" date="2005-05" db="EMBL/GenBank/DDBJ databases">
        <authorList>
            <person name="Stapleton M."/>
            <person name="Carlson J."/>
            <person name="Chavez C."/>
            <person name="Frise E."/>
            <person name="George R."/>
            <person name="Pacleb J."/>
            <person name="Park S."/>
            <person name="Wan K."/>
            <person name="Yu C."/>
            <person name="Celniker S."/>
        </authorList>
    </citation>
    <scope>NUCLEOTIDE SEQUENCE [LARGE SCALE MRNA] OF 2-181</scope>
</reference>
<reference key="4">
    <citation type="journal article" date="2006" name="Genes Dev.">
        <title>An MMP liberates the Ninjurin A ectodomain to signal a loss of cell adhesion.</title>
        <authorList>
            <person name="Zhang S."/>
            <person name="Dailey G.M."/>
            <person name="Kwan E."/>
            <person name="Glasheen B.M."/>
            <person name="Sroga G.E."/>
            <person name="Page-McCaw A."/>
        </authorList>
    </citation>
    <scope>NOMENCLATURE</scope>
</reference>
<reference key="5">
    <citation type="journal article" date="2021" name="Nature">
        <title>NINJ1 mediates plasma membrane rupture during lytic cell death.</title>
        <authorList>
            <person name="Kayagaki N."/>
            <person name="Kornfeld O.S."/>
            <person name="Lee B.L."/>
            <person name="Stowe I.B."/>
            <person name="O'Rourke K."/>
            <person name="Li Q."/>
            <person name="Sandoval W."/>
            <person name="Yan D."/>
            <person name="Kang J."/>
            <person name="Xu M."/>
            <person name="Zhang J."/>
            <person name="Lee W.P."/>
            <person name="McKenzie B.S."/>
            <person name="Ulas G."/>
            <person name="Payandeh J."/>
            <person name="Roose-Girma M."/>
            <person name="Modrusan Z."/>
            <person name="Reja R."/>
            <person name="Sagolla M."/>
            <person name="Webster J.D."/>
            <person name="Cho V."/>
            <person name="Andrews T.D."/>
            <person name="Morris L.X."/>
            <person name="Miosge L.A."/>
            <person name="Goodnow C.C."/>
            <person name="Bertram E.M."/>
            <person name="Dixit V.M."/>
        </authorList>
    </citation>
    <scope>FUNCTION</scope>
</reference>
<keyword id="KW-0130">Cell adhesion</keyword>
<keyword id="KW-0204">Cytolysis</keyword>
<keyword id="KW-0472">Membrane</keyword>
<keyword id="KW-1185">Reference proteome</keyword>
<keyword id="KW-0812">Transmembrane</keyword>
<keyword id="KW-1133">Transmembrane helix</keyword>
<protein>
    <recommendedName>
        <fullName evidence="6">Ninjurin-B</fullName>
        <shortName evidence="7">dNINJ-B</shortName>
    </recommendedName>
</protein>
<name>NIJB_DROME</name>